<reference key="1">
    <citation type="journal article" date="1992" name="J. Biol. Chem.">
        <title>Cloning and expression of the Gal beta 1, 3GalNAc alpha 2,3-sialyltransferase.</title>
        <authorList>
            <person name="Gillespie W.M."/>
            <person name="Kelm S."/>
            <person name="Paulson J.C."/>
        </authorList>
    </citation>
    <scope>NUCLEOTIDE SEQUENCE [MRNA]</scope>
    <scope>PROTEIN SEQUENCE OF 8-29 AND 56-77</scope>
    <scope>ALTERNATIVE SPLICING</scope>
    <source>
        <tissue>Liver</tissue>
        <tissue>Salivary gland</tissue>
    </source>
</reference>
<reference key="2">
    <citation type="journal article" date="1994" name="J. Biol. Chem.">
        <title>Cloning of a novel alpha 2,3-sialyltransferase that sialylates glycoprotein and glycolipid carbohydrate groups.</title>
        <authorList>
            <person name="Kitagawa H."/>
            <person name="Paulson J.C."/>
        </authorList>
    </citation>
    <scope>FUNCTION</scope>
    <scope>CATALYTIC ACTIVITY</scope>
</reference>
<reference key="3">
    <citation type="journal article" date="2009" name="Nat. Struct. Mol. Biol.">
        <title>Structural insight into mammalian sialyltransferases.</title>
        <authorList>
            <person name="Rao F.V."/>
            <person name="Rich J.R."/>
            <person name="Rakic B."/>
            <person name="Buddai S."/>
            <person name="Schwartz M.F."/>
            <person name="Johnson K."/>
            <person name="Bowe C."/>
            <person name="Wakarchuk W.W."/>
            <person name="Defrees S."/>
            <person name="Withers S.G."/>
            <person name="Strynadka N.C."/>
        </authorList>
    </citation>
    <scope>X-RAY CRYSTALLOGRAPHY (1.25 ANGSTROMS) OF 46-343 IN COMPLEXES WITH CMP AND N-ACETYL-2-DEOXY-2-AMINO-GALACTOSE</scope>
    <scope>CATALYTIC ACTIVITY</scope>
    <scope>FUNCTION</scope>
    <scope>DISULFIDE BONDS</scope>
</reference>
<sequence>MAPMRKKSTLKLLTLLVLFIFLTSFFLNYSHTVVTTAWFPKQMVIELSENFKKLMKYPYRPCTCTRCIEEQRVSAWFDERFNRSMQPLLTAKNAHLEEDTYKWWLRLQREKQPNNLNDTIRELFQVVPGNVDPLLEKRLVSCRRCAVVGNSGNLKESYYGPQIDSHDFVLRMNKAPTEGFEADVGSKTTHHFVYPESFRELAQEVSMILVPFKTTDLEWVISATTTGRISHTYVPVPAKIKVKKEKILIYHPAFIKYVFDRWLQGHGRYPSTGILSVIFSLHICDEVDLYGFGADSKGNWHHYWENNPSAGAFRKTGVHDGDFESNVTTILASINKIRIFKGR</sequence>
<protein>
    <recommendedName>
        <fullName>CMP-N-acetylneuraminate-beta-galactosamide-alpha-2,3-sialyltransferase 1</fullName>
        <shortName>Alpha 2,3-ST 1</shortName>
        <shortName>Beta-galactoside alpha-2,3-sialyltransferase 1</shortName>
        <ecNumber evidence="4 5">2.4.3.4</ecNumber>
    </recommendedName>
    <alternativeName>
        <fullName>Gal-NAc6S</fullName>
    </alternativeName>
    <alternativeName>
        <fullName>Gal-beta-1,3-GalNAc-alpha-2,3-sialyltransferase</fullName>
    </alternativeName>
    <alternativeName>
        <fullName>Monosialoganglioside sialyltransferase</fullName>
        <ecNumber evidence="5">2.4.3.2</ecNumber>
    </alternativeName>
    <alternativeName>
        <fullName>ST3Gal I</fullName>
        <shortName>ST3GalI</shortName>
    </alternativeName>
    <alternativeName>
        <fullName>ST3GalA.1</fullName>
    </alternativeName>
    <alternativeName>
        <fullName>ST3O</fullName>
    </alternativeName>
    <alternativeName>
        <fullName>Sialyltransferase 4A</fullName>
        <shortName>SIAT4-A</shortName>
    </alternativeName>
</protein>
<gene>
    <name type="primary">ST3GAL1</name>
    <name type="synonym">SIAT4A</name>
</gene>
<feature type="chain" id="PRO_0000149256" description="CMP-N-acetylneuraminate-beta-galactosamide-alpha-2,3-sialyltransferase 1">
    <location>
        <begin position="1"/>
        <end position="343"/>
    </location>
</feature>
<feature type="topological domain" description="Cytoplasmic" evidence="3">
    <location>
        <begin position="1"/>
        <end position="11"/>
    </location>
</feature>
<feature type="transmembrane region" description="Helical; Signal-anchor for type II membrane protein" evidence="3">
    <location>
        <begin position="12"/>
        <end position="27"/>
    </location>
</feature>
<feature type="topological domain" description="Lumenal" evidence="3">
    <location>
        <begin position="28"/>
        <end position="343"/>
    </location>
</feature>
<feature type="binding site" evidence="4">
    <location>
        <position position="108"/>
    </location>
    <ligand>
        <name>substrate</name>
    </ligand>
</feature>
<feature type="binding site" evidence="4">
    <location>
        <position position="150"/>
    </location>
    <ligand>
        <name>substrate</name>
    </ligand>
</feature>
<feature type="binding site" evidence="4">
    <location>
        <position position="173"/>
    </location>
    <ligand>
        <name>substrate</name>
    </ligand>
</feature>
<feature type="binding site" evidence="4">
    <location>
        <position position="233"/>
    </location>
    <ligand>
        <name>substrate</name>
    </ligand>
</feature>
<feature type="binding site" evidence="4">
    <location>
        <position position="269"/>
    </location>
    <ligand>
        <name>substrate</name>
    </ligand>
</feature>
<feature type="binding site" evidence="4">
    <location>
        <position position="273"/>
    </location>
    <ligand>
        <name>substrate</name>
    </ligand>
</feature>
<feature type="binding site" evidence="4">
    <location>
        <position position="293"/>
    </location>
    <ligand>
        <name>substrate</name>
    </ligand>
</feature>
<feature type="binding site" evidence="4">
    <location>
        <position position="302"/>
    </location>
    <ligand>
        <name>substrate</name>
    </ligand>
</feature>
<feature type="binding site" evidence="4">
    <location>
        <position position="319"/>
    </location>
    <ligand>
        <name>substrate</name>
    </ligand>
</feature>
<feature type="glycosylation site" description="N-linked (GlcNAc...) asparagine" evidence="3">
    <location>
        <position position="28"/>
    </location>
</feature>
<feature type="glycosylation site" description="N-linked (GlcNAc...) asparagine" evidence="3">
    <location>
        <position position="82"/>
    </location>
</feature>
<feature type="glycosylation site" description="N-linked (GlcNAc...) asparagine" evidence="3">
    <location>
        <position position="117"/>
    </location>
</feature>
<feature type="glycosylation site" description="N-linked (GlcNAc...) asparagine" evidence="3">
    <location>
        <position position="326"/>
    </location>
</feature>
<feature type="disulfide bond" evidence="4">
    <location>
        <begin position="62"/>
        <end position="67"/>
    </location>
</feature>
<feature type="disulfide bond" evidence="4">
    <location>
        <begin position="64"/>
        <end position="142"/>
    </location>
</feature>
<feature type="disulfide bond" evidence="4">
    <location>
        <begin position="145"/>
        <end position="284"/>
    </location>
</feature>
<feature type="strand" evidence="10">
    <location>
        <begin position="63"/>
        <end position="66"/>
    </location>
</feature>
<feature type="strand" evidence="10">
    <location>
        <begin position="71"/>
        <end position="73"/>
    </location>
</feature>
<feature type="helix" evidence="10">
    <location>
        <begin position="75"/>
        <end position="80"/>
    </location>
</feature>
<feature type="turn" evidence="10">
    <location>
        <begin position="91"/>
        <end position="93"/>
    </location>
</feature>
<feature type="helix" evidence="10">
    <location>
        <begin position="98"/>
        <end position="105"/>
    </location>
</feature>
<feature type="turn" evidence="10">
    <location>
        <begin position="106"/>
        <end position="108"/>
    </location>
</feature>
<feature type="helix" evidence="10">
    <location>
        <begin position="116"/>
        <end position="123"/>
    </location>
</feature>
<feature type="turn" evidence="10">
    <location>
        <begin position="124"/>
        <end position="126"/>
    </location>
</feature>
<feature type="turn" evidence="10">
    <location>
        <begin position="133"/>
        <end position="136"/>
    </location>
</feature>
<feature type="helix" evidence="10">
    <location>
        <begin position="137"/>
        <end position="139"/>
    </location>
</feature>
<feature type="strand" evidence="10">
    <location>
        <begin position="144"/>
        <end position="148"/>
    </location>
</feature>
<feature type="helix" evidence="10">
    <location>
        <begin position="152"/>
        <end position="154"/>
    </location>
</feature>
<feature type="helix" evidence="10">
    <location>
        <begin position="160"/>
        <end position="164"/>
    </location>
</feature>
<feature type="strand" evidence="10">
    <location>
        <begin position="166"/>
        <end position="172"/>
    </location>
</feature>
<feature type="helix" evidence="10">
    <location>
        <begin position="181"/>
        <end position="184"/>
    </location>
</feature>
<feature type="strand" evidence="10">
    <location>
        <begin position="189"/>
        <end position="194"/>
    </location>
</feature>
<feature type="strand" evidence="10">
    <location>
        <begin position="206"/>
        <end position="209"/>
    </location>
</feature>
<feature type="helix" evidence="10">
    <location>
        <begin position="214"/>
        <end position="223"/>
    </location>
</feature>
<feature type="turn" evidence="10">
    <location>
        <begin position="224"/>
        <end position="226"/>
    </location>
</feature>
<feature type="strand" evidence="10">
    <location>
        <begin position="231"/>
        <end position="235"/>
    </location>
</feature>
<feature type="helix" evidence="10">
    <location>
        <begin position="244"/>
        <end position="246"/>
    </location>
</feature>
<feature type="strand" evidence="10">
    <location>
        <begin position="247"/>
        <end position="250"/>
    </location>
</feature>
<feature type="helix" evidence="10">
    <location>
        <begin position="252"/>
        <end position="261"/>
    </location>
</feature>
<feature type="strand" evidence="10">
    <location>
        <begin position="267"/>
        <end position="269"/>
    </location>
</feature>
<feature type="helix" evidence="10">
    <location>
        <begin position="272"/>
        <end position="283"/>
    </location>
</feature>
<feature type="strand" evidence="10">
    <location>
        <begin position="285"/>
        <end position="291"/>
    </location>
</feature>
<feature type="strand" evidence="9">
    <location>
        <begin position="317"/>
        <end position="319"/>
    </location>
</feature>
<feature type="helix" evidence="10">
    <location>
        <begin position="321"/>
        <end position="333"/>
    </location>
</feature>
<feature type="strand" evidence="10">
    <location>
        <begin position="336"/>
        <end position="340"/>
    </location>
</feature>
<name>SIA4A_PIG</name>
<organism>
    <name type="scientific">Sus scrofa</name>
    <name type="common">Pig</name>
    <dbReference type="NCBI Taxonomy" id="9823"/>
    <lineage>
        <taxon>Eukaryota</taxon>
        <taxon>Metazoa</taxon>
        <taxon>Chordata</taxon>
        <taxon>Craniata</taxon>
        <taxon>Vertebrata</taxon>
        <taxon>Euteleostomi</taxon>
        <taxon>Mammalia</taxon>
        <taxon>Eutheria</taxon>
        <taxon>Laurasiatheria</taxon>
        <taxon>Artiodactyla</taxon>
        <taxon>Suina</taxon>
        <taxon>Suidae</taxon>
        <taxon>Sus</taxon>
    </lineage>
</organism>
<comment type="function">
    <text evidence="1 4 5">A beta-galactoside alpha2-&gt;3 sialyltransferase involved in terminal sialylation of glycoproteins and glycolipids (PubMed:19820709, PubMed:8288606). Catalyzes the transfer of sialic acid (N-acetyl-neuraminic acid; Neu5Ac) from the nucleotide sugar donor CMP-Neu5Ac onto acceptor Galbeta-(1-&gt;3)-GalNAc-terminated glycoconjugates through an alpha2-3 linkage (PubMed:19820709, PubMed:8288606). Adds sialic acid to the core 1 O-glycan, Galbeta-(1-&gt;3)-GalNAc-O-Ser/Thr, which is a major structure of mucin-type O-glycans (PubMed:19820709, PubMed:8288606). As part of a homeostatic mechanism that regulates CD8-positive T cell numbers, sialylates core 1 O-glycans of T cell glycoproteins, SPN/CD43 and PTPRC/CD45. Prevents premature apoptosis of thymic CD8-positive T cells prior to peripheral emigration, whereas in the secondary lymphoid organs controls the survival of CD8-positive memory T cells generated following a successful immune response (By similarity). Transfers sialic acid to asialofetuin, presumably onto Galbeta-(1-&gt;3)-GalNAc-O-Ser (PubMed:8288606). Sialylates GM1a, GA1 and GD1b gangliosides to form GD1a, GM1b and GT1b, respectively (By similarity) (PubMed:8288606).</text>
</comment>
<comment type="catalytic activity">
    <reaction evidence="4 5">
        <text>a beta-D-galactosyl-(1-&gt;3)-N-acetyl-alpha-D-galactosaminyl derivative + CMP-N-acetyl-beta-neuraminate = an N-acetyl-alpha-neuraminyl-(2-&gt;3)-beta-D-galactosyl-(1-&gt;3)-N-acetyl-alpha-D-galactosaminyl derivative + CMP + H(+)</text>
        <dbReference type="Rhea" id="RHEA:21616"/>
        <dbReference type="ChEBI" id="CHEBI:15378"/>
        <dbReference type="ChEBI" id="CHEBI:57812"/>
        <dbReference type="ChEBI" id="CHEBI:60377"/>
        <dbReference type="ChEBI" id="CHEBI:133470"/>
        <dbReference type="ChEBI" id="CHEBI:139596"/>
        <dbReference type="EC" id="2.4.3.4"/>
    </reaction>
    <physiologicalReaction direction="left-to-right" evidence="7 8">
        <dbReference type="Rhea" id="RHEA:21617"/>
    </physiologicalReaction>
</comment>
<comment type="catalytic activity">
    <reaction evidence="5">
        <text>a ganglioside GM1 (d18:1(4E)) + CMP-N-acetyl-beta-neuraminate = a ganglioside GD1a (d18:1(4E)) + CMP + H(+)</text>
        <dbReference type="Rhea" id="RHEA:18021"/>
        <dbReference type="ChEBI" id="CHEBI:15378"/>
        <dbReference type="ChEBI" id="CHEBI:57812"/>
        <dbReference type="ChEBI" id="CHEBI:60377"/>
        <dbReference type="ChEBI" id="CHEBI:77709"/>
        <dbReference type="ChEBI" id="CHEBI:78445"/>
        <dbReference type="EC" id="2.4.3.2"/>
    </reaction>
    <physiologicalReaction direction="left-to-right" evidence="8">
        <dbReference type="Rhea" id="RHEA:18022"/>
    </physiologicalReaction>
</comment>
<comment type="catalytic activity">
    <reaction evidence="1">
        <text>ganglioside GM1 (d18:1(4E)/18:0) + CMP-N-acetyl-beta-neuraminate = ganglioside GD1a (18:1(4E)/18:0) + CMP + H(+)</text>
        <dbReference type="Rhea" id="RHEA:48248"/>
        <dbReference type="ChEBI" id="CHEBI:15378"/>
        <dbReference type="ChEBI" id="CHEBI:57812"/>
        <dbReference type="ChEBI" id="CHEBI:60377"/>
        <dbReference type="ChEBI" id="CHEBI:73110"/>
        <dbReference type="ChEBI" id="CHEBI:90153"/>
    </reaction>
    <physiologicalReaction direction="left-to-right" evidence="1">
        <dbReference type="Rhea" id="RHEA:48249"/>
    </physiologicalReaction>
</comment>
<comment type="catalytic activity">
    <reaction evidence="5">
        <text>a ganglioside GA1 (d18:1(4E)) + CMP-N-acetyl-beta-neuraminate = a ganglioside GM1b (d18:1(4E)) + CMP + H(+)</text>
        <dbReference type="Rhea" id="RHEA:47560"/>
        <dbReference type="ChEBI" id="CHEBI:15378"/>
        <dbReference type="ChEBI" id="CHEBI:27938"/>
        <dbReference type="ChEBI" id="CHEBI:57812"/>
        <dbReference type="ChEBI" id="CHEBI:60377"/>
        <dbReference type="ChEBI" id="CHEBI:78568"/>
    </reaction>
    <physiologicalReaction direction="left-to-right" evidence="8">
        <dbReference type="Rhea" id="RHEA:47561"/>
    </physiologicalReaction>
</comment>
<comment type="catalytic activity">
    <reaction evidence="1">
        <text>a ganglioside GD1b + CMP-N-acetyl-beta-neuraminate = a ganglioside GT1b + CMP + H(+)</text>
        <dbReference type="Rhea" id="RHEA:48240"/>
        <dbReference type="ChEBI" id="CHEBI:15378"/>
        <dbReference type="ChEBI" id="CHEBI:57812"/>
        <dbReference type="ChEBI" id="CHEBI:60377"/>
        <dbReference type="ChEBI" id="CHEBI:82939"/>
        <dbReference type="ChEBI" id="CHEBI:82940"/>
    </reaction>
    <physiologicalReaction direction="left-to-right" evidence="1">
        <dbReference type="Rhea" id="RHEA:48241"/>
    </physiologicalReaction>
</comment>
<comment type="catalytic activity">
    <reaction evidence="2">
        <text>a 3-O-[beta-D-galactosyl-(1-&gt;3)-N-acetyl-alpha-D-galactosaminyl]-L-threonyl-[protein] + CMP-N-acetyl-beta-neuraminate = a 3-O-[N-acetyl-alpha-neuraminyl-(2-&gt;3)-beta-D-galactosyl-(1-&gt;3)-N-acetyl-alpha-D-galactosaminyl]-L-threonyl-[protein] + CMP + H(+)</text>
        <dbReference type="Rhea" id="RHEA:56208"/>
        <dbReference type="Rhea" id="RHEA-COMP:13923"/>
        <dbReference type="Rhea" id="RHEA-COMP:14417"/>
        <dbReference type="ChEBI" id="CHEBI:15378"/>
        <dbReference type="ChEBI" id="CHEBI:57812"/>
        <dbReference type="ChEBI" id="CHEBI:60377"/>
        <dbReference type="ChEBI" id="CHEBI:137950"/>
        <dbReference type="ChEBI" id="CHEBI:139598"/>
    </reaction>
    <physiologicalReaction direction="left-to-right" evidence="2">
        <dbReference type="Rhea" id="RHEA:56209"/>
    </physiologicalReaction>
</comment>
<comment type="catalytic activity">
    <reaction evidence="2">
        <text>a 3-O-[beta-D-galactosyl-(1-&gt;3)-N-acetyl-alpha-D-galactosaminyl]-L-seryl-[protein] + CMP-N-acetyl-beta-neuraminate = 3-O-[N-acetyl-alpha-neuraminyl-(2-&gt;3)-beta-D-galactosyl-(1-&gt;3)-N-acetyl-alpha-D-galactosaminyl]-L-seryl-[protein] + CMP + H(+)</text>
        <dbReference type="Rhea" id="RHEA:56204"/>
        <dbReference type="Rhea" id="RHEA-COMP:13922"/>
        <dbReference type="Rhea" id="RHEA-COMP:14416"/>
        <dbReference type="ChEBI" id="CHEBI:15378"/>
        <dbReference type="ChEBI" id="CHEBI:57812"/>
        <dbReference type="ChEBI" id="CHEBI:60377"/>
        <dbReference type="ChEBI" id="CHEBI:137949"/>
        <dbReference type="ChEBI" id="CHEBI:139597"/>
    </reaction>
    <physiologicalReaction direction="left-to-right" evidence="2">
        <dbReference type="Rhea" id="RHEA:56205"/>
    </physiologicalReaction>
</comment>
<comment type="pathway">
    <text evidence="8">Protein modification; protein glycosylation.</text>
</comment>
<comment type="pathway">
    <text evidence="8">Glycolipid biosynthesis.</text>
</comment>
<comment type="subcellular location">
    <subcellularLocation>
        <location evidence="2">Golgi apparatus</location>
        <location evidence="2">Golgi stack membrane</location>
        <topology evidence="3">Single-pass type II membrane protein</topology>
    </subcellularLocation>
    <subcellularLocation>
        <location evidence="2">Golgi apparatus</location>
        <location evidence="2">trans-Golgi network membrane</location>
        <topology evidence="3">Single-pass type II membrane protein</topology>
    </subcellularLocation>
    <subcellularLocation>
        <location>Secreted</location>
    </subcellularLocation>
    <text evidence="2">Membrane-bound form in medial and trans cisternae of Golgi (By similarity). Secreted into the body fluid.</text>
</comment>
<comment type="alternative products">
    <event type="alternative splicing"/>
    <isoform>
        <id>Q02745-1</id>
        <name>Long</name>
        <sequence type="displayed"/>
    </isoform>
    <isoform>
        <id>Q02745-2</id>
        <name>Short</name>
        <sequence type="not described"/>
    </isoform>
</comment>
<comment type="tissue specificity">
    <text>The long isoform is abundant in salivary gland, liver, lung, and colon mucosa. Both long and short forms are detected in submaxillary salivary glands.</text>
</comment>
<comment type="PTM">
    <text>The soluble form derives from the membrane form by proteolytic processing.</text>
</comment>
<comment type="miscellaneous">
    <molecule>Isoform Short</molecule>
    <text evidence="6">Seems to lack a 40 residues internal segment.</text>
</comment>
<comment type="similarity">
    <text evidence="6">Belongs to the glycosyltransferase 29 family.</text>
</comment>
<evidence type="ECO:0000250" key="1">
    <source>
        <dbReference type="UniProtKB" id="P54751"/>
    </source>
</evidence>
<evidence type="ECO:0000250" key="2">
    <source>
        <dbReference type="UniProtKB" id="Q11201"/>
    </source>
</evidence>
<evidence type="ECO:0000255" key="3"/>
<evidence type="ECO:0000269" key="4">
    <source>
    </source>
</evidence>
<evidence type="ECO:0000269" key="5">
    <source>
    </source>
</evidence>
<evidence type="ECO:0000305" key="6"/>
<evidence type="ECO:0000305" key="7">
    <source>
    </source>
</evidence>
<evidence type="ECO:0000305" key="8">
    <source>
    </source>
</evidence>
<evidence type="ECO:0007829" key="9">
    <source>
        <dbReference type="PDB" id="2WML"/>
    </source>
</evidence>
<evidence type="ECO:0007829" key="10">
    <source>
        <dbReference type="PDB" id="2WNF"/>
    </source>
</evidence>
<proteinExistence type="evidence at protein level"/>
<keyword id="KW-0002">3D-structure</keyword>
<keyword id="KW-0025">Alternative splicing</keyword>
<keyword id="KW-0903">Direct protein sequencing</keyword>
<keyword id="KW-1015">Disulfide bond</keyword>
<keyword id="KW-0325">Glycoprotein</keyword>
<keyword id="KW-0328">Glycosyltransferase</keyword>
<keyword id="KW-0333">Golgi apparatus</keyword>
<keyword id="KW-0443">Lipid metabolism</keyword>
<keyword id="KW-0472">Membrane</keyword>
<keyword id="KW-1185">Reference proteome</keyword>
<keyword id="KW-0964">Secreted</keyword>
<keyword id="KW-0735">Signal-anchor</keyword>
<keyword id="KW-0808">Transferase</keyword>
<keyword id="KW-0812">Transmembrane</keyword>
<keyword id="KW-1133">Transmembrane helix</keyword>
<accession>Q02745</accession>
<dbReference type="EC" id="2.4.3.4" evidence="4 5"/>
<dbReference type="EC" id="2.4.3.2" evidence="5"/>
<dbReference type="EMBL" id="M97753">
    <property type="protein sequence ID" value="AAA31125.1"/>
    <property type="molecule type" value="mRNA"/>
</dbReference>
<dbReference type="PIR" id="A45073">
    <property type="entry name" value="A45073"/>
</dbReference>
<dbReference type="RefSeq" id="NP_001004047.1">
    <molecule id="Q02745-1"/>
    <property type="nucleotide sequence ID" value="NM_001004047.1"/>
</dbReference>
<dbReference type="PDB" id="2WML">
    <property type="method" value="X-ray"/>
    <property type="resolution" value="1.90 A"/>
    <property type="chains" value="A=46-343"/>
</dbReference>
<dbReference type="PDB" id="2WNB">
    <property type="method" value="X-ray"/>
    <property type="resolution" value="1.55 A"/>
    <property type="chains" value="A=46-343"/>
</dbReference>
<dbReference type="PDB" id="2WNF">
    <property type="method" value="X-ray"/>
    <property type="resolution" value="1.25 A"/>
    <property type="chains" value="A=46-343"/>
</dbReference>
<dbReference type="PDBsum" id="2WML"/>
<dbReference type="PDBsum" id="2WNB"/>
<dbReference type="PDBsum" id="2WNF"/>
<dbReference type="SMR" id="Q02745"/>
<dbReference type="FunCoup" id="Q02745">
    <property type="interactions" value="184"/>
</dbReference>
<dbReference type="STRING" id="9823.ENSSSCP00000006354"/>
<dbReference type="SwissLipids" id="SLP:000001385"/>
<dbReference type="CAZy" id="GT29">
    <property type="family name" value="Glycosyltransferase Family 29"/>
</dbReference>
<dbReference type="GlyCosmos" id="Q02745">
    <property type="glycosylation" value="4 sites, No reported glycans"/>
</dbReference>
<dbReference type="GlyGen" id="Q02745">
    <property type="glycosylation" value="4 sites"/>
</dbReference>
<dbReference type="PaxDb" id="9823-ENSSSCP00000006354"/>
<dbReference type="PeptideAtlas" id="Q02745"/>
<dbReference type="GeneID" id="445537"/>
<dbReference type="KEGG" id="ssc:445537"/>
<dbReference type="CTD" id="6482"/>
<dbReference type="eggNOG" id="KOG2692">
    <property type="taxonomic scope" value="Eukaryota"/>
</dbReference>
<dbReference type="InParanoid" id="Q02745"/>
<dbReference type="OrthoDB" id="10264956at2759"/>
<dbReference type="BRENDA" id="2.4.99.4">
    <property type="organism ID" value="6170"/>
</dbReference>
<dbReference type="UniPathway" id="UPA00378"/>
<dbReference type="EvolutionaryTrace" id="Q02745"/>
<dbReference type="Proteomes" id="UP000008227">
    <property type="component" value="Unplaced"/>
</dbReference>
<dbReference type="Proteomes" id="UP000314985">
    <property type="component" value="Unplaced"/>
</dbReference>
<dbReference type="Proteomes" id="UP000694570">
    <property type="component" value="Unplaced"/>
</dbReference>
<dbReference type="Proteomes" id="UP000694571">
    <property type="component" value="Unplaced"/>
</dbReference>
<dbReference type="Proteomes" id="UP000694720">
    <property type="component" value="Unplaced"/>
</dbReference>
<dbReference type="Proteomes" id="UP000694722">
    <property type="component" value="Unplaced"/>
</dbReference>
<dbReference type="Proteomes" id="UP000694723">
    <property type="component" value="Unplaced"/>
</dbReference>
<dbReference type="Proteomes" id="UP000694724">
    <property type="component" value="Unplaced"/>
</dbReference>
<dbReference type="Proteomes" id="UP000694725">
    <property type="component" value="Unplaced"/>
</dbReference>
<dbReference type="Proteomes" id="UP000694726">
    <property type="component" value="Unplaced"/>
</dbReference>
<dbReference type="Proteomes" id="UP000694727">
    <property type="component" value="Unplaced"/>
</dbReference>
<dbReference type="Proteomes" id="UP000694728">
    <property type="component" value="Unplaced"/>
</dbReference>
<dbReference type="GO" id="GO:0005576">
    <property type="term" value="C:extracellular region"/>
    <property type="evidence" value="ECO:0007669"/>
    <property type="project" value="UniProtKB-SubCell"/>
</dbReference>
<dbReference type="GO" id="GO:1990675">
    <property type="term" value="C:Golgi medial cisterna membrane"/>
    <property type="evidence" value="ECO:0000250"/>
    <property type="project" value="UniProtKB"/>
</dbReference>
<dbReference type="GO" id="GO:1990676">
    <property type="term" value="C:Golgi trans cisterna membrane"/>
    <property type="evidence" value="ECO:0000250"/>
    <property type="project" value="UniProtKB"/>
</dbReference>
<dbReference type="GO" id="GO:0016020">
    <property type="term" value="C:membrane"/>
    <property type="evidence" value="ECO:0000318"/>
    <property type="project" value="GO_Central"/>
</dbReference>
<dbReference type="GO" id="GO:0032588">
    <property type="term" value="C:trans-Golgi network membrane"/>
    <property type="evidence" value="ECO:0000250"/>
    <property type="project" value="UniProtKB"/>
</dbReference>
<dbReference type="GO" id="GO:0047288">
    <property type="term" value="F:beta-D-galactosyl-(1-&gt;3)-N-acetyl-beta-D-galactosaminide alpha-2,3- sialyltransferase"/>
    <property type="evidence" value="ECO:0007669"/>
    <property type="project" value="RHEA"/>
</dbReference>
<dbReference type="GO" id="GO:0003836">
    <property type="term" value="F:beta-galactoside (CMP) alpha-2,3-sialyltransferase activity"/>
    <property type="evidence" value="ECO:0000314"/>
    <property type="project" value="UniProtKB"/>
</dbReference>
<dbReference type="GO" id="GO:0010706">
    <property type="term" value="P:ganglioside biosynthetic process via lactosylceramide"/>
    <property type="evidence" value="ECO:0000318"/>
    <property type="project" value="GO_Central"/>
</dbReference>
<dbReference type="GO" id="GO:0006054">
    <property type="term" value="P:N-acetylneuraminate metabolic process"/>
    <property type="evidence" value="ECO:0000314"/>
    <property type="project" value="UniProtKB"/>
</dbReference>
<dbReference type="GO" id="GO:0006486">
    <property type="term" value="P:protein glycosylation"/>
    <property type="evidence" value="ECO:0000318"/>
    <property type="project" value="GO_Central"/>
</dbReference>
<dbReference type="GO" id="GO:0006487">
    <property type="term" value="P:protein N-linked glycosylation"/>
    <property type="evidence" value="ECO:0000314"/>
    <property type="project" value="UniProtKB"/>
</dbReference>
<dbReference type="GO" id="GO:0097503">
    <property type="term" value="P:sialylation"/>
    <property type="evidence" value="ECO:0000314"/>
    <property type="project" value="UniProtKB"/>
</dbReference>
<dbReference type="CDD" id="cd23980">
    <property type="entry name" value="GT29_ST3GAL1"/>
    <property type="match status" value="1"/>
</dbReference>
<dbReference type="FunFam" id="3.90.1480.20:FF:000034">
    <property type="entry name" value="CMP-N-acetylneuraminate-beta-galactosamide-alpha-2,3-sialyltransferase 1"/>
    <property type="match status" value="1"/>
</dbReference>
<dbReference type="Gene3D" id="3.90.1480.20">
    <property type="entry name" value="Glycosyl transferase family 29"/>
    <property type="match status" value="1"/>
</dbReference>
<dbReference type="InterPro" id="IPR051757">
    <property type="entry name" value="Beta-gal_alpha2-3_sialyltrans"/>
</dbReference>
<dbReference type="InterPro" id="IPR001675">
    <property type="entry name" value="Glyco_trans_29"/>
</dbReference>
<dbReference type="InterPro" id="IPR038578">
    <property type="entry name" value="GT29-like_sf"/>
</dbReference>
<dbReference type="InterPro" id="IPR012163">
    <property type="entry name" value="Sialyl_trans"/>
</dbReference>
<dbReference type="PANTHER" id="PTHR46032">
    <property type="entry name" value="ALPHA-2,3-SIALYLTRANSFERASE ST3GAL I ISOFORM X1"/>
    <property type="match status" value="1"/>
</dbReference>
<dbReference type="PANTHER" id="PTHR46032:SF6">
    <property type="entry name" value="CMP-N-ACETYLNEURAMINATE-BETA-GALACTOSAMIDE-ALPHA-2,3-SIALYLTRANSFERASE 1"/>
    <property type="match status" value="1"/>
</dbReference>
<dbReference type="Pfam" id="PF00777">
    <property type="entry name" value="Glyco_transf_29"/>
    <property type="match status" value="1"/>
</dbReference>
<dbReference type="PIRSF" id="PIRSF005557">
    <property type="entry name" value="Sialyl_trans"/>
    <property type="match status" value="1"/>
</dbReference>